<comment type="function">
    <text evidence="1">Redox regulated molecular chaperone. Protects both thermally unfolding and oxidatively damaged proteins from irreversible aggregation. Plays an important role in the bacterial defense system toward oxidative stress.</text>
</comment>
<comment type="subcellular location">
    <subcellularLocation>
        <location evidence="1">Cytoplasm</location>
    </subcellularLocation>
</comment>
<comment type="PTM">
    <text evidence="1">Under oxidizing conditions two disulfide bonds are formed involving the reactive cysteines. Under reducing conditions zinc is bound to the reactive cysteines and the protein is inactive.</text>
</comment>
<comment type="similarity">
    <text evidence="1">Belongs to the HSP33 family.</text>
</comment>
<dbReference type="EMBL" id="CP000612">
    <property type="protein sequence ID" value="ABO49877.1"/>
    <property type="molecule type" value="Genomic_DNA"/>
</dbReference>
<dbReference type="RefSeq" id="WP_011877699.1">
    <property type="nucleotide sequence ID" value="NC_009253.1"/>
</dbReference>
<dbReference type="SMR" id="A4J474"/>
<dbReference type="STRING" id="349161.Dred_1343"/>
<dbReference type="KEGG" id="drm:Dred_1343"/>
<dbReference type="eggNOG" id="COG1281">
    <property type="taxonomic scope" value="Bacteria"/>
</dbReference>
<dbReference type="HOGENOM" id="CLU_054493_1_0_9"/>
<dbReference type="OrthoDB" id="9776534at2"/>
<dbReference type="Proteomes" id="UP000001556">
    <property type="component" value="Chromosome"/>
</dbReference>
<dbReference type="GO" id="GO:0005737">
    <property type="term" value="C:cytoplasm"/>
    <property type="evidence" value="ECO:0007669"/>
    <property type="project" value="UniProtKB-SubCell"/>
</dbReference>
<dbReference type="GO" id="GO:0044183">
    <property type="term" value="F:protein folding chaperone"/>
    <property type="evidence" value="ECO:0007669"/>
    <property type="project" value="TreeGrafter"/>
</dbReference>
<dbReference type="GO" id="GO:0051082">
    <property type="term" value="F:unfolded protein binding"/>
    <property type="evidence" value="ECO:0007669"/>
    <property type="project" value="UniProtKB-UniRule"/>
</dbReference>
<dbReference type="GO" id="GO:0042026">
    <property type="term" value="P:protein refolding"/>
    <property type="evidence" value="ECO:0007669"/>
    <property type="project" value="TreeGrafter"/>
</dbReference>
<dbReference type="CDD" id="cd00498">
    <property type="entry name" value="Hsp33"/>
    <property type="match status" value="1"/>
</dbReference>
<dbReference type="Gene3D" id="3.55.30.10">
    <property type="entry name" value="Hsp33 domain"/>
    <property type="match status" value="1"/>
</dbReference>
<dbReference type="Gene3D" id="3.90.1280.10">
    <property type="entry name" value="HSP33 redox switch-like"/>
    <property type="match status" value="1"/>
</dbReference>
<dbReference type="HAMAP" id="MF_00117">
    <property type="entry name" value="HslO"/>
    <property type="match status" value="1"/>
</dbReference>
<dbReference type="InterPro" id="IPR000397">
    <property type="entry name" value="Heat_shock_Hsp33"/>
</dbReference>
<dbReference type="InterPro" id="IPR016154">
    <property type="entry name" value="Heat_shock_Hsp33_C"/>
</dbReference>
<dbReference type="InterPro" id="IPR016153">
    <property type="entry name" value="Heat_shock_Hsp33_N"/>
</dbReference>
<dbReference type="NCBIfam" id="NF001033">
    <property type="entry name" value="PRK00114.1"/>
    <property type="match status" value="1"/>
</dbReference>
<dbReference type="PANTHER" id="PTHR30111">
    <property type="entry name" value="33 KDA CHAPERONIN"/>
    <property type="match status" value="1"/>
</dbReference>
<dbReference type="PANTHER" id="PTHR30111:SF1">
    <property type="entry name" value="33 KDA CHAPERONIN"/>
    <property type="match status" value="1"/>
</dbReference>
<dbReference type="Pfam" id="PF01430">
    <property type="entry name" value="HSP33"/>
    <property type="match status" value="1"/>
</dbReference>
<dbReference type="PIRSF" id="PIRSF005261">
    <property type="entry name" value="Heat_shock_Hsp33"/>
    <property type="match status" value="1"/>
</dbReference>
<dbReference type="SUPFAM" id="SSF64397">
    <property type="entry name" value="Hsp33 domain"/>
    <property type="match status" value="1"/>
</dbReference>
<dbReference type="SUPFAM" id="SSF118352">
    <property type="entry name" value="HSP33 redox switch-like"/>
    <property type="match status" value="1"/>
</dbReference>
<protein>
    <recommendedName>
        <fullName evidence="1">33 kDa chaperonin</fullName>
    </recommendedName>
    <alternativeName>
        <fullName evidence="1">Heat shock protein 33 homolog</fullName>
        <shortName evidence="1">HSP33</shortName>
    </alternativeName>
</protein>
<keyword id="KW-0143">Chaperone</keyword>
<keyword id="KW-0963">Cytoplasm</keyword>
<keyword id="KW-1015">Disulfide bond</keyword>
<keyword id="KW-0676">Redox-active center</keyword>
<keyword id="KW-1185">Reference proteome</keyword>
<keyword id="KW-0862">Zinc</keyword>
<proteinExistence type="inferred from homology"/>
<gene>
    <name evidence="1" type="primary">hslO</name>
    <name type="ordered locus">Dred_1343</name>
</gene>
<evidence type="ECO:0000255" key="1">
    <source>
        <dbReference type="HAMAP-Rule" id="MF_00117"/>
    </source>
</evidence>
<accession>A4J474</accession>
<reference key="1">
    <citation type="submission" date="2007-03" db="EMBL/GenBank/DDBJ databases">
        <title>Complete sequence of Desulfotomaculum reducens MI-1.</title>
        <authorList>
            <consortium name="US DOE Joint Genome Institute"/>
            <person name="Copeland A."/>
            <person name="Lucas S."/>
            <person name="Lapidus A."/>
            <person name="Barry K."/>
            <person name="Detter J.C."/>
            <person name="Glavina del Rio T."/>
            <person name="Hammon N."/>
            <person name="Israni S."/>
            <person name="Dalin E."/>
            <person name="Tice H."/>
            <person name="Pitluck S."/>
            <person name="Sims D."/>
            <person name="Brettin T."/>
            <person name="Bruce D."/>
            <person name="Han C."/>
            <person name="Tapia R."/>
            <person name="Schmutz J."/>
            <person name="Larimer F."/>
            <person name="Land M."/>
            <person name="Hauser L."/>
            <person name="Kyrpides N."/>
            <person name="Kim E."/>
            <person name="Tebo B.M."/>
            <person name="Richardson P."/>
        </authorList>
    </citation>
    <scope>NUCLEOTIDE SEQUENCE [LARGE SCALE GENOMIC DNA]</scope>
    <source>
        <strain>ATCC BAA-1160 / DSM 100696 / MI-1</strain>
    </source>
</reference>
<sequence length="294" mass="31825">MQDYLVRAVASDGNFRIFSARTTNTVEEARTRHNSWPVATAALGRTMTAALLMGANLKGEDTLSIRVLGDGPLGAIIVTSNAKGEVRGYVQEPQIHLPSTPEGKLAVGAAVGKGHLHITKDLGLKEPFTGSVELVSGEIAEDFAHYLTTSEQTPSAVSLGVLVDTDNSVVAAGGLILQLLPGAGEEVLEILEQNLRQLPHLSSLIKNGETPEDIIKRVTKGIEMKFLESNPVGFSCQCSRERLENLLVGIGKDEVTSMLQEQGAAEINCHFCAENYHFDKKDLQRILKRIEEKD</sequence>
<feature type="chain" id="PRO_1000071357" description="33 kDa chaperonin">
    <location>
        <begin position="1"/>
        <end position="294"/>
    </location>
</feature>
<feature type="disulfide bond" description="Redox-active" evidence="1">
    <location>
        <begin position="236"/>
        <end position="238"/>
    </location>
</feature>
<feature type="disulfide bond" description="Redox-active" evidence="1">
    <location>
        <begin position="269"/>
        <end position="272"/>
    </location>
</feature>
<organism>
    <name type="scientific">Desulforamulus reducens (strain ATCC BAA-1160 / DSM 100696 / MI-1)</name>
    <name type="common">Desulfotomaculum reducens</name>
    <dbReference type="NCBI Taxonomy" id="349161"/>
    <lineage>
        <taxon>Bacteria</taxon>
        <taxon>Bacillati</taxon>
        <taxon>Bacillota</taxon>
        <taxon>Clostridia</taxon>
        <taxon>Eubacteriales</taxon>
        <taxon>Peptococcaceae</taxon>
        <taxon>Desulforamulus</taxon>
    </lineage>
</organism>
<name>HSLO_DESRM</name>